<accession>A0KKF6</accession>
<reference key="1">
    <citation type="journal article" date="2006" name="J. Bacteriol.">
        <title>Genome sequence of Aeromonas hydrophila ATCC 7966T: jack of all trades.</title>
        <authorList>
            <person name="Seshadri R."/>
            <person name="Joseph S.W."/>
            <person name="Chopra A.K."/>
            <person name="Sha J."/>
            <person name="Shaw J."/>
            <person name="Graf J."/>
            <person name="Haft D.H."/>
            <person name="Wu M."/>
            <person name="Ren Q."/>
            <person name="Rosovitz M.J."/>
            <person name="Madupu R."/>
            <person name="Tallon L."/>
            <person name="Kim M."/>
            <person name="Jin S."/>
            <person name="Vuong H."/>
            <person name="Stine O.C."/>
            <person name="Ali A."/>
            <person name="Horneman A.J."/>
            <person name="Heidelberg J.F."/>
        </authorList>
    </citation>
    <scope>NUCLEOTIDE SEQUENCE [LARGE SCALE GENOMIC DNA]</scope>
    <source>
        <strain>ATCC 7966 / DSM 30187 / BCRC 13018 / CCUG 14551 / JCM 1027 / KCTC 2358 / NCIMB 9240 / NCTC 8049</strain>
    </source>
</reference>
<organism>
    <name type="scientific">Aeromonas hydrophila subsp. hydrophila (strain ATCC 7966 / DSM 30187 / BCRC 13018 / CCUG 14551 / JCM 1027 / KCTC 2358 / NCIMB 9240 / NCTC 8049)</name>
    <dbReference type="NCBI Taxonomy" id="380703"/>
    <lineage>
        <taxon>Bacteria</taxon>
        <taxon>Pseudomonadati</taxon>
        <taxon>Pseudomonadota</taxon>
        <taxon>Gammaproteobacteria</taxon>
        <taxon>Aeromonadales</taxon>
        <taxon>Aeromonadaceae</taxon>
        <taxon>Aeromonas</taxon>
    </lineage>
</organism>
<dbReference type="EC" id="6.1.1.10" evidence="1"/>
<dbReference type="EMBL" id="CP000462">
    <property type="protein sequence ID" value="ABK39655.1"/>
    <property type="molecule type" value="Genomic_DNA"/>
</dbReference>
<dbReference type="RefSeq" id="WP_011706089.1">
    <property type="nucleotide sequence ID" value="NC_008570.1"/>
</dbReference>
<dbReference type="RefSeq" id="YP_856757.1">
    <property type="nucleotide sequence ID" value="NC_008570.1"/>
</dbReference>
<dbReference type="SMR" id="A0KKF6"/>
<dbReference type="STRING" id="380703.AHA_2233"/>
<dbReference type="EnsemblBacteria" id="ABK39655">
    <property type="protein sequence ID" value="ABK39655"/>
    <property type="gene ID" value="AHA_2233"/>
</dbReference>
<dbReference type="GeneID" id="4489272"/>
<dbReference type="KEGG" id="aha:AHA_2233"/>
<dbReference type="PATRIC" id="fig|380703.7.peg.2233"/>
<dbReference type="eggNOG" id="COG0073">
    <property type="taxonomic scope" value="Bacteria"/>
</dbReference>
<dbReference type="eggNOG" id="COG0143">
    <property type="taxonomic scope" value="Bacteria"/>
</dbReference>
<dbReference type="HOGENOM" id="CLU_009710_7_0_6"/>
<dbReference type="OrthoDB" id="9810191at2"/>
<dbReference type="Proteomes" id="UP000000756">
    <property type="component" value="Chromosome"/>
</dbReference>
<dbReference type="GO" id="GO:0005829">
    <property type="term" value="C:cytosol"/>
    <property type="evidence" value="ECO:0007669"/>
    <property type="project" value="TreeGrafter"/>
</dbReference>
<dbReference type="GO" id="GO:0005524">
    <property type="term" value="F:ATP binding"/>
    <property type="evidence" value="ECO:0007669"/>
    <property type="project" value="UniProtKB-UniRule"/>
</dbReference>
<dbReference type="GO" id="GO:0046872">
    <property type="term" value="F:metal ion binding"/>
    <property type="evidence" value="ECO:0007669"/>
    <property type="project" value="UniProtKB-KW"/>
</dbReference>
<dbReference type="GO" id="GO:0004825">
    <property type="term" value="F:methionine-tRNA ligase activity"/>
    <property type="evidence" value="ECO:0007669"/>
    <property type="project" value="UniProtKB-UniRule"/>
</dbReference>
<dbReference type="GO" id="GO:0000049">
    <property type="term" value="F:tRNA binding"/>
    <property type="evidence" value="ECO:0007669"/>
    <property type="project" value="UniProtKB-KW"/>
</dbReference>
<dbReference type="GO" id="GO:0006431">
    <property type="term" value="P:methionyl-tRNA aminoacylation"/>
    <property type="evidence" value="ECO:0007669"/>
    <property type="project" value="UniProtKB-UniRule"/>
</dbReference>
<dbReference type="CDD" id="cd07957">
    <property type="entry name" value="Anticodon_Ia_Met"/>
    <property type="match status" value="1"/>
</dbReference>
<dbReference type="CDD" id="cd00814">
    <property type="entry name" value="MetRS_core"/>
    <property type="match status" value="1"/>
</dbReference>
<dbReference type="CDD" id="cd02800">
    <property type="entry name" value="tRNA_bind_EcMetRS_like"/>
    <property type="match status" value="1"/>
</dbReference>
<dbReference type="FunFam" id="1.10.730.10:FF:000005">
    <property type="entry name" value="Methionine--tRNA ligase"/>
    <property type="match status" value="1"/>
</dbReference>
<dbReference type="FunFam" id="2.20.28.20:FF:000001">
    <property type="entry name" value="Methionine--tRNA ligase"/>
    <property type="match status" value="1"/>
</dbReference>
<dbReference type="FunFam" id="2.40.50.140:FF:000042">
    <property type="entry name" value="Methionine--tRNA ligase"/>
    <property type="match status" value="1"/>
</dbReference>
<dbReference type="Gene3D" id="3.40.50.620">
    <property type="entry name" value="HUPs"/>
    <property type="match status" value="1"/>
</dbReference>
<dbReference type="Gene3D" id="1.10.730.10">
    <property type="entry name" value="Isoleucyl-tRNA Synthetase, Domain 1"/>
    <property type="match status" value="1"/>
</dbReference>
<dbReference type="Gene3D" id="2.20.28.20">
    <property type="entry name" value="Methionyl-tRNA synthetase, Zn-domain"/>
    <property type="match status" value="1"/>
</dbReference>
<dbReference type="Gene3D" id="2.40.50.140">
    <property type="entry name" value="Nucleic acid-binding proteins"/>
    <property type="match status" value="1"/>
</dbReference>
<dbReference type="HAMAP" id="MF_00098">
    <property type="entry name" value="Met_tRNA_synth_type1"/>
    <property type="match status" value="1"/>
</dbReference>
<dbReference type="InterPro" id="IPR001412">
    <property type="entry name" value="aa-tRNA-synth_I_CS"/>
</dbReference>
<dbReference type="InterPro" id="IPR041872">
    <property type="entry name" value="Anticodon_Met"/>
</dbReference>
<dbReference type="InterPro" id="IPR004495">
    <property type="entry name" value="Met-tRNA-synth_bsu_C"/>
</dbReference>
<dbReference type="InterPro" id="IPR023458">
    <property type="entry name" value="Met-tRNA_ligase_1"/>
</dbReference>
<dbReference type="InterPro" id="IPR014758">
    <property type="entry name" value="Met-tRNA_synth"/>
</dbReference>
<dbReference type="InterPro" id="IPR015413">
    <property type="entry name" value="Methionyl/Leucyl_tRNA_Synth"/>
</dbReference>
<dbReference type="InterPro" id="IPR033911">
    <property type="entry name" value="MetRS_core"/>
</dbReference>
<dbReference type="InterPro" id="IPR029038">
    <property type="entry name" value="MetRS_Zn"/>
</dbReference>
<dbReference type="InterPro" id="IPR012340">
    <property type="entry name" value="NA-bd_OB-fold"/>
</dbReference>
<dbReference type="InterPro" id="IPR014729">
    <property type="entry name" value="Rossmann-like_a/b/a_fold"/>
</dbReference>
<dbReference type="InterPro" id="IPR002547">
    <property type="entry name" value="tRNA-bd_dom"/>
</dbReference>
<dbReference type="InterPro" id="IPR009080">
    <property type="entry name" value="tRNAsynth_Ia_anticodon-bd"/>
</dbReference>
<dbReference type="NCBIfam" id="TIGR00398">
    <property type="entry name" value="metG"/>
    <property type="match status" value="1"/>
</dbReference>
<dbReference type="NCBIfam" id="TIGR00399">
    <property type="entry name" value="metG_C_term"/>
    <property type="match status" value="1"/>
</dbReference>
<dbReference type="NCBIfam" id="NF001100">
    <property type="entry name" value="PRK00133.1"/>
    <property type="match status" value="1"/>
</dbReference>
<dbReference type="PANTHER" id="PTHR45765">
    <property type="entry name" value="METHIONINE--TRNA LIGASE"/>
    <property type="match status" value="1"/>
</dbReference>
<dbReference type="PANTHER" id="PTHR45765:SF1">
    <property type="entry name" value="METHIONINE--TRNA LIGASE, CYTOPLASMIC"/>
    <property type="match status" value="1"/>
</dbReference>
<dbReference type="Pfam" id="PF19303">
    <property type="entry name" value="Anticodon_3"/>
    <property type="match status" value="1"/>
</dbReference>
<dbReference type="Pfam" id="PF09334">
    <property type="entry name" value="tRNA-synt_1g"/>
    <property type="match status" value="1"/>
</dbReference>
<dbReference type="Pfam" id="PF01588">
    <property type="entry name" value="tRNA_bind"/>
    <property type="match status" value="1"/>
</dbReference>
<dbReference type="PRINTS" id="PR01041">
    <property type="entry name" value="TRNASYNTHMET"/>
</dbReference>
<dbReference type="SUPFAM" id="SSF47323">
    <property type="entry name" value="Anticodon-binding domain of a subclass of class I aminoacyl-tRNA synthetases"/>
    <property type="match status" value="1"/>
</dbReference>
<dbReference type="SUPFAM" id="SSF57770">
    <property type="entry name" value="Methionyl-tRNA synthetase (MetRS), Zn-domain"/>
    <property type="match status" value="1"/>
</dbReference>
<dbReference type="SUPFAM" id="SSF50249">
    <property type="entry name" value="Nucleic acid-binding proteins"/>
    <property type="match status" value="1"/>
</dbReference>
<dbReference type="SUPFAM" id="SSF52374">
    <property type="entry name" value="Nucleotidylyl transferase"/>
    <property type="match status" value="1"/>
</dbReference>
<dbReference type="PROSITE" id="PS00178">
    <property type="entry name" value="AA_TRNA_LIGASE_I"/>
    <property type="match status" value="1"/>
</dbReference>
<dbReference type="PROSITE" id="PS50886">
    <property type="entry name" value="TRBD"/>
    <property type="match status" value="1"/>
</dbReference>
<name>SYM_AERHH</name>
<keyword id="KW-0030">Aminoacyl-tRNA synthetase</keyword>
<keyword id="KW-0067">ATP-binding</keyword>
<keyword id="KW-0963">Cytoplasm</keyword>
<keyword id="KW-0436">Ligase</keyword>
<keyword id="KW-0479">Metal-binding</keyword>
<keyword id="KW-0547">Nucleotide-binding</keyword>
<keyword id="KW-0648">Protein biosynthesis</keyword>
<keyword id="KW-1185">Reference proteome</keyword>
<keyword id="KW-0694">RNA-binding</keyword>
<keyword id="KW-0820">tRNA-binding</keyword>
<keyword id="KW-0862">Zinc</keyword>
<feature type="chain" id="PRO_0000331775" description="Methionine--tRNA ligase">
    <location>
        <begin position="1"/>
        <end position="677"/>
    </location>
</feature>
<feature type="domain" description="tRNA-binding" evidence="1">
    <location>
        <begin position="576"/>
        <end position="677"/>
    </location>
</feature>
<feature type="short sequence motif" description="'HIGH' region">
    <location>
        <begin position="15"/>
        <end position="25"/>
    </location>
</feature>
<feature type="short sequence motif" description="'KMSKS' region">
    <location>
        <begin position="333"/>
        <end position="337"/>
    </location>
</feature>
<feature type="binding site" evidence="1">
    <location>
        <position position="146"/>
    </location>
    <ligand>
        <name>Zn(2+)</name>
        <dbReference type="ChEBI" id="CHEBI:29105"/>
    </ligand>
</feature>
<feature type="binding site" evidence="1">
    <location>
        <position position="149"/>
    </location>
    <ligand>
        <name>Zn(2+)</name>
        <dbReference type="ChEBI" id="CHEBI:29105"/>
    </ligand>
</feature>
<feature type="binding site" evidence="1">
    <location>
        <position position="159"/>
    </location>
    <ligand>
        <name>Zn(2+)</name>
        <dbReference type="ChEBI" id="CHEBI:29105"/>
    </ligand>
</feature>
<feature type="binding site" evidence="1">
    <location>
        <position position="162"/>
    </location>
    <ligand>
        <name>Zn(2+)</name>
        <dbReference type="ChEBI" id="CHEBI:29105"/>
    </ligand>
</feature>
<feature type="binding site" evidence="1">
    <location>
        <position position="336"/>
    </location>
    <ligand>
        <name>ATP</name>
        <dbReference type="ChEBI" id="CHEBI:30616"/>
    </ligand>
</feature>
<sequence>MATDPRTMLVTCALPYANGSIHLGHMLEHIQADIWVRYQRMRGHQVHFVCADDAHGTPIMLKAQQLGITPEEMIAAVSKEHQADFAGFNISFDNYHSTHSDENRELAELIYGRLQAGGKIKSRTISQLFDPEKSMFLPDRFVKGTCPKCKSPEQYGDNCDSCGATYSPTELIDPKSAVSGATPVMKDSEHFFFDLPQFEKWLAEWVRGSGAIQEEMANKMQEWFESGLQQWDITRDAPYFGFEIPGAPGKYFYVWLDAPIGYMASFKNLCNKRRDIDFDSYWKADSEAELYHFIGKDIAYFHCLFWPSMLEGAGFRKPTKVNVHGYVTVNGAKMSKSKGTFIKASTYLNHLDPECLRYYYAAKLNSRIDDLDLNLDDFVARVNADVVNKLVNLASRNAGFIAKRFDGKLAATCAEPELYAEFANSRTAIAEAYESREFSRAIREIMALADKANRYVDDKAPWVIAKQEGADAELQAVCSVGINLFRVLMAYLKPVMPLLAERAEAFLAETLSWDGIEMPLVDHTVAPFKALFSRIEPAKIEAMIDASKEDLAKEQAPKASGPLVDDPISETISYDDFAKIDLRVALIKKAEAVPEADKLLKLQLDIGGETRQVFAGIKSAYNPEDLEGKLTVMVANLAPRKMRFGMSEGMVLAAGPGGKDLWILEPQEGAKPGMRVK</sequence>
<gene>
    <name evidence="1" type="primary">metG</name>
    <name type="ordered locus">AHA_2233</name>
</gene>
<protein>
    <recommendedName>
        <fullName evidence="1">Methionine--tRNA ligase</fullName>
        <ecNumber evidence="1">6.1.1.10</ecNumber>
    </recommendedName>
    <alternativeName>
        <fullName evidence="1">Methionyl-tRNA synthetase</fullName>
        <shortName evidence="1">MetRS</shortName>
    </alternativeName>
</protein>
<evidence type="ECO:0000255" key="1">
    <source>
        <dbReference type="HAMAP-Rule" id="MF_00098"/>
    </source>
</evidence>
<proteinExistence type="inferred from homology"/>
<comment type="function">
    <text evidence="1">Is required not only for elongation of protein synthesis but also for the initiation of all mRNA translation through initiator tRNA(fMet) aminoacylation.</text>
</comment>
<comment type="catalytic activity">
    <reaction evidence="1">
        <text>tRNA(Met) + L-methionine + ATP = L-methionyl-tRNA(Met) + AMP + diphosphate</text>
        <dbReference type="Rhea" id="RHEA:13481"/>
        <dbReference type="Rhea" id="RHEA-COMP:9667"/>
        <dbReference type="Rhea" id="RHEA-COMP:9698"/>
        <dbReference type="ChEBI" id="CHEBI:30616"/>
        <dbReference type="ChEBI" id="CHEBI:33019"/>
        <dbReference type="ChEBI" id="CHEBI:57844"/>
        <dbReference type="ChEBI" id="CHEBI:78442"/>
        <dbReference type="ChEBI" id="CHEBI:78530"/>
        <dbReference type="ChEBI" id="CHEBI:456215"/>
        <dbReference type="EC" id="6.1.1.10"/>
    </reaction>
</comment>
<comment type="cofactor">
    <cofactor evidence="1">
        <name>Zn(2+)</name>
        <dbReference type="ChEBI" id="CHEBI:29105"/>
    </cofactor>
    <text evidence="1">Binds 1 zinc ion per subunit.</text>
</comment>
<comment type="subunit">
    <text evidence="1">Homodimer.</text>
</comment>
<comment type="subcellular location">
    <subcellularLocation>
        <location evidence="1">Cytoplasm</location>
    </subcellularLocation>
</comment>
<comment type="similarity">
    <text evidence="1">Belongs to the class-I aminoacyl-tRNA synthetase family. MetG type 1 subfamily.</text>
</comment>